<gene>
    <name type="primary">MEIS1</name>
</gene>
<dbReference type="EMBL" id="U85707">
    <property type="protein sequence ID" value="AAC51642.1"/>
    <property type="molecule type" value="mRNA"/>
</dbReference>
<dbReference type="EMBL" id="CR612956">
    <property type="status" value="NOT_ANNOTATED_CDS"/>
    <property type="molecule type" value="mRNA"/>
</dbReference>
<dbReference type="EMBL" id="AC007392">
    <property type="status" value="NOT_ANNOTATED_CDS"/>
    <property type="molecule type" value="Genomic_DNA"/>
</dbReference>
<dbReference type="EMBL" id="AC092669">
    <property type="status" value="NOT_ANNOTATED_CDS"/>
    <property type="molecule type" value="Genomic_DNA"/>
</dbReference>
<dbReference type="EMBL" id="AC093641">
    <property type="status" value="NOT_ANNOTATED_CDS"/>
    <property type="molecule type" value="Genomic_DNA"/>
</dbReference>
<dbReference type="EMBL" id="BC043503">
    <property type="protein sequence ID" value="AAH43503.1"/>
    <property type="molecule type" value="mRNA"/>
</dbReference>
<dbReference type="CCDS" id="CCDS46309.1">
    <molecule id="O00470-1"/>
</dbReference>
<dbReference type="RefSeq" id="NP_002389.1">
    <molecule id="O00470-1"/>
    <property type="nucleotide sequence ID" value="NM_002398.3"/>
</dbReference>
<dbReference type="PDB" id="4XRS">
    <property type="method" value="X-ray"/>
    <property type="resolution" value="3.50 A"/>
    <property type="chains" value="A/B=279-336"/>
</dbReference>
<dbReference type="PDB" id="5EGO">
    <property type="method" value="X-ray"/>
    <property type="resolution" value="2.54 A"/>
    <property type="chains" value="A=279-333"/>
</dbReference>
<dbReference type="PDBsum" id="4XRS"/>
<dbReference type="PDBsum" id="5EGO"/>
<dbReference type="SMR" id="O00470"/>
<dbReference type="BioGRID" id="110375">
    <property type="interactions" value="33"/>
</dbReference>
<dbReference type="CORUM" id="O00470"/>
<dbReference type="FunCoup" id="O00470">
    <property type="interactions" value="482"/>
</dbReference>
<dbReference type="IntAct" id="O00470">
    <property type="interactions" value="32"/>
</dbReference>
<dbReference type="MINT" id="O00470"/>
<dbReference type="STRING" id="9606.ENSP00000272369"/>
<dbReference type="ChEMBL" id="CHEMBL4879409"/>
<dbReference type="GlyGen" id="O00470">
    <property type="glycosylation" value="2 sites, 1 O-linked glycan (1 site)"/>
</dbReference>
<dbReference type="iPTMnet" id="O00470"/>
<dbReference type="PhosphoSitePlus" id="O00470"/>
<dbReference type="BioMuta" id="MEIS1"/>
<dbReference type="jPOST" id="O00470"/>
<dbReference type="MassIVE" id="O00470"/>
<dbReference type="PaxDb" id="9606-ENSP00000272369"/>
<dbReference type="PeptideAtlas" id="O00470"/>
<dbReference type="ProteomicsDB" id="47917">
    <molecule id="O00470-1"/>
</dbReference>
<dbReference type="ProteomicsDB" id="47918">
    <molecule id="O00470-2"/>
</dbReference>
<dbReference type="Pumba" id="O00470"/>
<dbReference type="Antibodypedia" id="3157">
    <property type="antibodies" value="318 antibodies from 40 providers"/>
</dbReference>
<dbReference type="DNASU" id="4211"/>
<dbReference type="Ensembl" id="ENST00000272369.14">
    <molecule id="O00470-1"/>
    <property type="protein sequence ID" value="ENSP00000272369.8"/>
    <property type="gene ID" value="ENSG00000143995.20"/>
</dbReference>
<dbReference type="Ensembl" id="ENST00000398506.6">
    <molecule id="O00470-2"/>
    <property type="protein sequence ID" value="ENSP00000381518.2"/>
    <property type="gene ID" value="ENSG00000143995.20"/>
</dbReference>
<dbReference type="GeneID" id="4211"/>
<dbReference type="KEGG" id="hsa:4211"/>
<dbReference type="MANE-Select" id="ENST00000272369.14">
    <property type="protein sequence ID" value="ENSP00000272369.8"/>
    <property type="RefSeq nucleotide sequence ID" value="NM_002398.3"/>
    <property type="RefSeq protein sequence ID" value="NP_002389.1"/>
</dbReference>
<dbReference type="UCSC" id="uc002sdu.4">
    <molecule id="O00470-1"/>
    <property type="organism name" value="human"/>
</dbReference>
<dbReference type="AGR" id="HGNC:7000"/>
<dbReference type="CTD" id="4211"/>
<dbReference type="DisGeNET" id="4211"/>
<dbReference type="GeneCards" id="MEIS1"/>
<dbReference type="HGNC" id="HGNC:7000">
    <property type="gene designation" value="MEIS1"/>
</dbReference>
<dbReference type="HPA" id="ENSG00000143995">
    <property type="expression patterns" value="Low tissue specificity"/>
</dbReference>
<dbReference type="MIM" id="601739">
    <property type="type" value="gene"/>
</dbReference>
<dbReference type="MIM" id="612853">
    <property type="type" value="phenotype"/>
</dbReference>
<dbReference type="neXtProt" id="NX_O00470"/>
<dbReference type="OpenTargets" id="ENSG00000143995"/>
<dbReference type="PharmGKB" id="PA30740"/>
<dbReference type="VEuPathDB" id="HostDB:ENSG00000143995"/>
<dbReference type="eggNOG" id="KOG0773">
    <property type="taxonomic scope" value="Eukaryota"/>
</dbReference>
<dbReference type="GeneTree" id="ENSGT00940000156327"/>
<dbReference type="InParanoid" id="O00470"/>
<dbReference type="OMA" id="TNHANAM"/>
<dbReference type="OrthoDB" id="10056939at2759"/>
<dbReference type="PAN-GO" id="O00470">
    <property type="GO annotations" value="10 GO annotations based on evolutionary models"/>
</dbReference>
<dbReference type="PhylomeDB" id="O00470"/>
<dbReference type="TreeFam" id="TF318093"/>
<dbReference type="PathwayCommons" id="O00470"/>
<dbReference type="Reactome" id="R-HSA-5617472">
    <property type="pathway name" value="Activation of anterior HOX genes in hindbrain development during early embryogenesis"/>
</dbReference>
<dbReference type="SignaLink" id="O00470"/>
<dbReference type="SIGNOR" id="O00470"/>
<dbReference type="BioGRID-ORCS" id="4211">
    <property type="hits" value="27 hits in 1183 CRISPR screens"/>
</dbReference>
<dbReference type="ChiTaRS" id="MEIS1">
    <property type="organism name" value="human"/>
</dbReference>
<dbReference type="GeneWiki" id="MEIS1"/>
<dbReference type="GenomeRNAi" id="4211"/>
<dbReference type="Pharos" id="O00470">
    <property type="development level" value="Tbio"/>
</dbReference>
<dbReference type="PRO" id="PR:O00470"/>
<dbReference type="Proteomes" id="UP000005640">
    <property type="component" value="Chromosome 2"/>
</dbReference>
<dbReference type="RNAct" id="O00470">
    <property type="molecule type" value="protein"/>
</dbReference>
<dbReference type="Bgee" id="ENSG00000143995">
    <property type="expression patterns" value="Expressed in right uterine tube and 182 other cell types or tissues"/>
</dbReference>
<dbReference type="ExpressionAtlas" id="O00470">
    <property type="expression patterns" value="baseline and differential"/>
</dbReference>
<dbReference type="GO" id="GO:0000785">
    <property type="term" value="C:chromatin"/>
    <property type="evidence" value="ECO:0000247"/>
    <property type="project" value="NTNU_SB"/>
</dbReference>
<dbReference type="GO" id="GO:0005634">
    <property type="term" value="C:nucleus"/>
    <property type="evidence" value="ECO:0007669"/>
    <property type="project" value="UniProtKB-SubCell"/>
</dbReference>
<dbReference type="GO" id="GO:0005667">
    <property type="term" value="C:transcription regulator complex"/>
    <property type="evidence" value="ECO:0007669"/>
    <property type="project" value="Ensembl"/>
</dbReference>
<dbReference type="GO" id="GO:0003682">
    <property type="term" value="F:chromatin binding"/>
    <property type="evidence" value="ECO:0007669"/>
    <property type="project" value="Ensembl"/>
</dbReference>
<dbReference type="GO" id="GO:0003677">
    <property type="term" value="F:DNA binding"/>
    <property type="evidence" value="ECO:0000314"/>
    <property type="project" value="UniProtKB"/>
</dbReference>
<dbReference type="GO" id="GO:0001228">
    <property type="term" value="F:DNA-binding transcription activator activity, RNA polymerase II-specific"/>
    <property type="evidence" value="ECO:0000318"/>
    <property type="project" value="GO_Central"/>
</dbReference>
<dbReference type="GO" id="GO:0000981">
    <property type="term" value="F:DNA-binding transcription factor activity, RNA polymerase II-specific"/>
    <property type="evidence" value="ECO:0000247"/>
    <property type="project" value="NTNU_SB"/>
</dbReference>
<dbReference type="GO" id="GO:0000978">
    <property type="term" value="F:RNA polymerase II cis-regulatory region sequence-specific DNA binding"/>
    <property type="evidence" value="ECO:0007669"/>
    <property type="project" value="Ensembl"/>
</dbReference>
<dbReference type="GO" id="GO:0001525">
    <property type="term" value="P:angiogenesis"/>
    <property type="evidence" value="ECO:0000318"/>
    <property type="project" value="GO_Central"/>
</dbReference>
<dbReference type="GO" id="GO:0009887">
    <property type="term" value="P:animal organ morphogenesis"/>
    <property type="evidence" value="ECO:0000318"/>
    <property type="project" value="GO_Central"/>
</dbReference>
<dbReference type="GO" id="GO:0007420">
    <property type="term" value="P:brain development"/>
    <property type="evidence" value="ECO:0000318"/>
    <property type="project" value="GO_Central"/>
</dbReference>
<dbReference type="GO" id="GO:0061049">
    <property type="term" value="P:cell growth involved in cardiac muscle cell development"/>
    <property type="evidence" value="ECO:0007669"/>
    <property type="project" value="Ensembl"/>
</dbReference>
<dbReference type="GO" id="GO:0060216">
    <property type="term" value="P:definitive hemopoiesis"/>
    <property type="evidence" value="ECO:0007669"/>
    <property type="project" value="Ensembl"/>
</dbReference>
<dbReference type="GO" id="GO:0009880">
    <property type="term" value="P:embryonic pattern specification"/>
    <property type="evidence" value="ECO:0000318"/>
    <property type="project" value="GO_Central"/>
</dbReference>
<dbReference type="GO" id="GO:0001654">
    <property type="term" value="P:eye development"/>
    <property type="evidence" value="ECO:0000318"/>
    <property type="project" value="GO_Central"/>
</dbReference>
<dbReference type="GO" id="GO:0030097">
    <property type="term" value="P:hemopoiesis"/>
    <property type="evidence" value="ECO:0000318"/>
    <property type="project" value="GO_Central"/>
</dbReference>
<dbReference type="GO" id="GO:0002089">
    <property type="term" value="P:lens morphogenesis in camera-type eye"/>
    <property type="evidence" value="ECO:0007669"/>
    <property type="project" value="Ensembl"/>
</dbReference>
<dbReference type="GO" id="GO:0007626">
    <property type="term" value="P:locomotory behavior"/>
    <property type="evidence" value="ECO:0007669"/>
    <property type="project" value="Ensembl"/>
</dbReference>
<dbReference type="GO" id="GO:0035855">
    <property type="term" value="P:megakaryocyte development"/>
    <property type="evidence" value="ECO:0007669"/>
    <property type="project" value="Ensembl"/>
</dbReference>
<dbReference type="GO" id="GO:0045638">
    <property type="term" value="P:negative regulation of myeloid cell differentiation"/>
    <property type="evidence" value="ECO:0000250"/>
    <property type="project" value="UniProtKB"/>
</dbReference>
<dbReference type="GO" id="GO:0045665">
    <property type="term" value="P:negative regulation of neuron differentiation"/>
    <property type="evidence" value="ECO:0007669"/>
    <property type="project" value="Ensembl"/>
</dbReference>
<dbReference type="GO" id="GO:0008284">
    <property type="term" value="P:positive regulation of cell population proliferation"/>
    <property type="evidence" value="ECO:0000318"/>
    <property type="project" value="GO_Central"/>
</dbReference>
<dbReference type="GO" id="GO:0045944">
    <property type="term" value="P:positive regulation of transcription by RNA polymerase II"/>
    <property type="evidence" value="ECO:0000318"/>
    <property type="project" value="GO_Central"/>
</dbReference>
<dbReference type="CDD" id="cd00086">
    <property type="entry name" value="homeodomain"/>
    <property type="match status" value="1"/>
</dbReference>
<dbReference type="FunFam" id="1.10.10.60:FF:000004">
    <property type="entry name" value="Meis2 homeobox isoform 2c"/>
    <property type="match status" value="1"/>
</dbReference>
<dbReference type="Gene3D" id="1.10.10.60">
    <property type="entry name" value="Homeodomain-like"/>
    <property type="match status" value="1"/>
</dbReference>
<dbReference type="InterPro" id="IPR001356">
    <property type="entry name" value="HD"/>
</dbReference>
<dbReference type="InterPro" id="IPR009057">
    <property type="entry name" value="Homeodomain-like_sf"/>
</dbReference>
<dbReference type="InterPro" id="IPR008422">
    <property type="entry name" value="KN_HD"/>
</dbReference>
<dbReference type="InterPro" id="IPR032453">
    <property type="entry name" value="PKNOX/Meis_N"/>
</dbReference>
<dbReference type="InterPro" id="IPR050224">
    <property type="entry name" value="TALE_homeobox"/>
</dbReference>
<dbReference type="PANTHER" id="PTHR11850">
    <property type="entry name" value="HOMEOBOX PROTEIN TRANSCRIPTION FACTORS"/>
    <property type="match status" value="1"/>
</dbReference>
<dbReference type="Pfam" id="PF05920">
    <property type="entry name" value="Homeobox_KN"/>
    <property type="match status" value="1"/>
</dbReference>
<dbReference type="Pfam" id="PF16493">
    <property type="entry name" value="Meis_PKNOX_N"/>
    <property type="match status" value="1"/>
</dbReference>
<dbReference type="SMART" id="SM00389">
    <property type="entry name" value="HOX"/>
    <property type="match status" value="1"/>
</dbReference>
<dbReference type="SUPFAM" id="SSF46689">
    <property type="entry name" value="Homeodomain-like"/>
    <property type="match status" value="1"/>
</dbReference>
<dbReference type="PROSITE" id="PS50071">
    <property type="entry name" value="HOMEOBOX_2"/>
    <property type="match status" value="1"/>
</dbReference>
<name>MEIS1_HUMAN</name>
<feature type="chain" id="PRO_0000049105" description="Homeobox protein Meis1">
    <location>
        <begin position="1"/>
        <end position="390"/>
    </location>
</feature>
<feature type="domain" description="MEIS N-terminal" evidence="2">
    <location>
        <begin position="108"/>
        <end position="192"/>
    </location>
</feature>
<feature type="DNA-binding region" description="Homeobox; TALE-type" evidence="3">
    <location>
        <begin position="272"/>
        <end position="334"/>
    </location>
</feature>
<feature type="region of interest" description="Disordered" evidence="4">
    <location>
        <begin position="190"/>
        <end position="279"/>
    </location>
</feature>
<feature type="region of interest" description="Interaction with DNA" evidence="13 14">
    <location>
        <begin position="299"/>
        <end position="329"/>
    </location>
</feature>
<feature type="region of interest" description="Required for transcriptional activation" evidence="1">
    <location>
        <begin position="335"/>
        <end position="390"/>
    </location>
</feature>
<feature type="compositionally biased region" description="Basic and acidic residues" evidence="4">
    <location>
        <begin position="190"/>
        <end position="202"/>
    </location>
</feature>
<feature type="compositionally biased region" description="Polar residues" evidence="4">
    <location>
        <begin position="203"/>
        <end position="213"/>
    </location>
</feature>
<feature type="splice variant" id="VSP_034957" description="In isoform 2." evidence="10">
    <original>MAQR</original>
    <variation>MQ</variation>
    <location>
        <begin position="1"/>
        <end position="4"/>
    </location>
</feature>
<feature type="splice variant" id="VSP_034958" description="In isoform 2." evidence="10">
    <original>PMSGMGMNMGMEGQWHYM</original>
    <variation>LQSMPGEYVARGGPMGVSMGQPSYTQPQMPPHPAQLRHGPPMHTYIPGHPHHPTVMMHGGPPHPGMPMSASSPTVLNTGDPTMSGQVMDIHAQ</variation>
    <location>
        <begin position="373"/>
        <end position="390"/>
    </location>
</feature>
<feature type="sequence variant" id="VAR_063166" description="Found in a patient with susceptibility to restless legs syndrome; dbSNP:rs61752693." evidence="6">
    <original>R</original>
    <variation>H</variation>
    <location>
        <position position="272"/>
    </location>
</feature>
<feature type="helix" evidence="17">
    <location>
        <begin position="281"/>
        <end position="293"/>
    </location>
</feature>
<feature type="turn" evidence="17">
    <location>
        <begin position="294"/>
        <end position="296"/>
    </location>
</feature>
<feature type="helix" evidence="17">
    <location>
        <begin position="302"/>
        <end position="312"/>
    </location>
</feature>
<feature type="helix" evidence="17">
    <location>
        <begin position="316"/>
        <end position="329"/>
    </location>
</feature>
<feature type="turn" evidence="17">
    <location>
        <begin position="330"/>
        <end position="333"/>
    </location>
</feature>
<organism>
    <name type="scientific">Homo sapiens</name>
    <name type="common">Human</name>
    <dbReference type="NCBI Taxonomy" id="9606"/>
    <lineage>
        <taxon>Eukaryota</taxon>
        <taxon>Metazoa</taxon>
        <taxon>Chordata</taxon>
        <taxon>Craniata</taxon>
        <taxon>Vertebrata</taxon>
        <taxon>Euteleostomi</taxon>
        <taxon>Mammalia</taxon>
        <taxon>Eutheria</taxon>
        <taxon>Euarchontoglires</taxon>
        <taxon>Primates</taxon>
        <taxon>Haplorrhini</taxon>
        <taxon>Catarrhini</taxon>
        <taxon>Hominidae</taxon>
        <taxon>Homo</taxon>
    </lineage>
</organism>
<sequence>MAQRYDDLPHYGGMDGVGIPSTMYGDPHAARSMQPVHHLNHGPPLHSHQYPHTAHTNAMAPSMGSSVNDALKRDKDAIYGHPLFPLLALIFEKCELATCTPREPGVAGGDVCSSESFNEDIAVFAKQIRAEKPLFSSNPELDNLMIQAIQVLRFHLLELEKVHELCDNFCHRYISCLKGKMPIDLVIDDREGGSKSDSEDITRSANLTDQPSWNRDHDDTASTRSGGTPGPSSGGHTSHSGDNSSEQGDGLDNSVASPSTGDDDDPDKDKKRHKKRGIFPKVATNIMRAWLFQHLTHPYPSEEQKKQLAQDTGLTILQVNNWFINARRRIVQPMIDQSNRAVSQGTPYNPDGQPMGGFVMDGQQHMGIRAPGPMSGMGMNMGMEGQWHYM</sequence>
<accession>O00470</accession>
<accession>A8MV50</accession>
<evidence type="ECO:0000250" key="1"/>
<evidence type="ECO:0000255" key="2"/>
<evidence type="ECO:0000255" key="3">
    <source>
        <dbReference type="PROSITE-ProRule" id="PRU00108"/>
    </source>
</evidence>
<evidence type="ECO:0000256" key="4">
    <source>
        <dbReference type="SAM" id="MobiDB-lite"/>
    </source>
</evidence>
<evidence type="ECO:0000269" key="5">
    <source>
    </source>
</evidence>
<evidence type="ECO:0000269" key="6">
    <source>
    </source>
</evidence>
<evidence type="ECO:0000269" key="7">
    <source>
    </source>
</evidence>
<evidence type="ECO:0000269" key="8">
    <source>
    </source>
</evidence>
<evidence type="ECO:0000269" key="9">
    <source>
    </source>
</evidence>
<evidence type="ECO:0000303" key="10">
    <source ref="2"/>
</evidence>
<evidence type="ECO:0000305" key="11"/>
<evidence type="ECO:0000305" key="12">
    <source>
    </source>
</evidence>
<evidence type="ECO:0000305" key="13">
    <source>
    </source>
</evidence>
<evidence type="ECO:0000305" key="14">
    <source>
    </source>
</evidence>
<evidence type="ECO:0007744" key="15">
    <source>
        <dbReference type="PDB" id="4XRS"/>
    </source>
</evidence>
<evidence type="ECO:0007744" key="16">
    <source>
        <dbReference type="PDB" id="5EGO"/>
    </source>
</evidence>
<evidence type="ECO:0007829" key="17">
    <source>
        <dbReference type="PDB" id="5EGO"/>
    </source>
</evidence>
<reference key="1">
    <citation type="journal article" date="1997" name="Genomics">
        <title>Cloning and mapping of the MEIS1 gene, the human homolog of a murine leukemogenic gene.</title>
        <authorList>
            <person name="Smith J.E. Jr."/>
            <person name="Bollekens J.A."/>
            <person name="Inghirami G."/>
            <person name="Takeshita K."/>
        </authorList>
    </citation>
    <scope>NUCLEOTIDE SEQUENCE [MRNA] (ISOFORM 1)</scope>
</reference>
<reference key="2">
    <citation type="submission" date="2004-07" db="EMBL/GenBank/DDBJ databases">
        <title>Full-length cDNA libraries and normalization.</title>
        <authorList>
            <person name="Li W.B."/>
            <person name="Gruber C."/>
            <person name="Jessee J."/>
            <person name="Polayes D."/>
        </authorList>
    </citation>
    <scope>NUCLEOTIDE SEQUENCE [LARGE SCALE MRNA] (ISOFORM 2)</scope>
    <source>
        <tissue>Placenta</tissue>
    </source>
</reference>
<reference key="3">
    <citation type="journal article" date="2005" name="Nature">
        <title>Generation and annotation of the DNA sequences of human chromosomes 2 and 4.</title>
        <authorList>
            <person name="Hillier L.W."/>
            <person name="Graves T.A."/>
            <person name="Fulton R.S."/>
            <person name="Fulton L.A."/>
            <person name="Pepin K.H."/>
            <person name="Minx P."/>
            <person name="Wagner-McPherson C."/>
            <person name="Layman D."/>
            <person name="Wylie K."/>
            <person name="Sekhon M."/>
            <person name="Becker M.C."/>
            <person name="Fewell G.A."/>
            <person name="Delehaunty K.D."/>
            <person name="Miner T.L."/>
            <person name="Nash W.E."/>
            <person name="Kremitzki C."/>
            <person name="Oddy L."/>
            <person name="Du H."/>
            <person name="Sun H."/>
            <person name="Bradshaw-Cordum H."/>
            <person name="Ali J."/>
            <person name="Carter J."/>
            <person name="Cordes M."/>
            <person name="Harris A."/>
            <person name="Isak A."/>
            <person name="van Brunt A."/>
            <person name="Nguyen C."/>
            <person name="Du F."/>
            <person name="Courtney L."/>
            <person name="Kalicki J."/>
            <person name="Ozersky P."/>
            <person name="Abbott S."/>
            <person name="Armstrong J."/>
            <person name="Belter E.A."/>
            <person name="Caruso L."/>
            <person name="Cedroni M."/>
            <person name="Cotton M."/>
            <person name="Davidson T."/>
            <person name="Desai A."/>
            <person name="Elliott G."/>
            <person name="Erb T."/>
            <person name="Fronick C."/>
            <person name="Gaige T."/>
            <person name="Haakenson W."/>
            <person name="Haglund K."/>
            <person name="Holmes A."/>
            <person name="Harkins R."/>
            <person name="Kim K."/>
            <person name="Kruchowski S.S."/>
            <person name="Strong C.M."/>
            <person name="Grewal N."/>
            <person name="Goyea E."/>
            <person name="Hou S."/>
            <person name="Levy A."/>
            <person name="Martinka S."/>
            <person name="Mead K."/>
            <person name="McLellan M.D."/>
            <person name="Meyer R."/>
            <person name="Randall-Maher J."/>
            <person name="Tomlinson C."/>
            <person name="Dauphin-Kohlberg S."/>
            <person name="Kozlowicz-Reilly A."/>
            <person name="Shah N."/>
            <person name="Swearengen-Shahid S."/>
            <person name="Snider J."/>
            <person name="Strong J.T."/>
            <person name="Thompson J."/>
            <person name="Yoakum M."/>
            <person name="Leonard S."/>
            <person name="Pearman C."/>
            <person name="Trani L."/>
            <person name="Radionenko M."/>
            <person name="Waligorski J.E."/>
            <person name="Wang C."/>
            <person name="Rock S.M."/>
            <person name="Tin-Wollam A.-M."/>
            <person name="Maupin R."/>
            <person name="Latreille P."/>
            <person name="Wendl M.C."/>
            <person name="Yang S.-P."/>
            <person name="Pohl C."/>
            <person name="Wallis J.W."/>
            <person name="Spieth J."/>
            <person name="Bieri T.A."/>
            <person name="Berkowicz N."/>
            <person name="Nelson J.O."/>
            <person name="Osborne J."/>
            <person name="Ding L."/>
            <person name="Meyer R."/>
            <person name="Sabo A."/>
            <person name="Shotland Y."/>
            <person name="Sinha P."/>
            <person name="Wohldmann P.E."/>
            <person name="Cook L.L."/>
            <person name="Hickenbotham M.T."/>
            <person name="Eldred J."/>
            <person name="Williams D."/>
            <person name="Jones T.A."/>
            <person name="She X."/>
            <person name="Ciccarelli F.D."/>
            <person name="Izaurralde E."/>
            <person name="Taylor J."/>
            <person name="Schmutz J."/>
            <person name="Myers R.M."/>
            <person name="Cox D.R."/>
            <person name="Huang X."/>
            <person name="McPherson J.D."/>
            <person name="Mardis E.R."/>
            <person name="Clifton S.W."/>
            <person name="Warren W.C."/>
            <person name="Chinwalla A.T."/>
            <person name="Eddy S.R."/>
            <person name="Marra M.A."/>
            <person name="Ovcharenko I."/>
            <person name="Furey T.S."/>
            <person name="Miller W."/>
            <person name="Eichler E.E."/>
            <person name="Bork P."/>
            <person name="Suyama M."/>
            <person name="Torrents D."/>
            <person name="Waterston R.H."/>
            <person name="Wilson R.K."/>
        </authorList>
    </citation>
    <scope>NUCLEOTIDE SEQUENCE [LARGE SCALE GENOMIC DNA]</scope>
</reference>
<reference key="4">
    <citation type="journal article" date="2004" name="Genome Res.">
        <title>The status, quality, and expansion of the NIH full-length cDNA project: the Mammalian Gene Collection (MGC).</title>
        <authorList>
            <consortium name="The MGC Project Team"/>
        </authorList>
    </citation>
    <scope>NUCLEOTIDE SEQUENCE [LARGE SCALE MRNA] (ISOFORM 1)</scope>
    <source>
        <tissue>Uterus</tissue>
    </source>
</reference>
<reference key="5">
    <citation type="journal article" date="2003" name="Blood">
        <title>Homeodomain proteins MEIS1 and PBXs regulate the lineage-specific transcription of the platelet factor 4 gene.</title>
        <authorList>
            <person name="Okada Y."/>
            <person name="Nagai R."/>
            <person name="Sato T."/>
            <person name="Matsuura E."/>
            <person name="Minami T."/>
            <person name="Morita I."/>
            <person name="Doi T."/>
        </authorList>
    </citation>
    <scope>FUNCTION</scope>
    <scope>INTERACTION WITH PBX1 AND PBX2</scope>
</reference>
<reference key="6">
    <citation type="journal article" date="2006" name="Cell">
        <title>Global, in vivo, and site-specific phosphorylation dynamics in signaling networks.</title>
        <authorList>
            <person name="Olsen J.V."/>
            <person name="Blagoev B."/>
            <person name="Gnad F."/>
            <person name="Macek B."/>
            <person name="Kumar C."/>
            <person name="Mortensen P."/>
            <person name="Mann M."/>
        </authorList>
    </citation>
    <scope>IDENTIFICATION BY MASS SPECTROMETRY [LARGE SCALE ANALYSIS]</scope>
    <source>
        <tissue>Cervix carcinoma</tissue>
    </source>
</reference>
<reference key="7">
    <citation type="journal article" date="2009" name="Biochem. J.">
        <title>PBX1 and MEIS1 up-regulate SOX3 gene expression by direct interaction with a consensus binding site within the basal promoter region.</title>
        <authorList>
            <person name="Mojsin M."/>
            <person name="Stevanovic M."/>
        </authorList>
    </citation>
    <scope>INTERACTION WITH PBX1</scope>
</reference>
<reference key="8">
    <citation type="journal article" date="2013" name="J. Proteome Res.">
        <title>Toward a comprehensive characterization of a human cancer cell phosphoproteome.</title>
        <authorList>
            <person name="Zhou H."/>
            <person name="Di Palma S."/>
            <person name="Preisinger C."/>
            <person name="Peng M."/>
            <person name="Polat A.N."/>
            <person name="Heck A.J."/>
            <person name="Mohammed S."/>
        </authorList>
    </citation>
    <scope>IDENTIFICATION BY MASS SPECTROMETRY [LARGE SCALE ANALYSIS]</scope>
    <source>
        <tissue>Erythroleukemia</tissue>
    </source>
</reference>
<reference evidence="15" key="9">
    <citation type="journal article" date="2015" name="Nature">
        <title>DNA-dependent formation of transcription factor pairs alters their binding specificity.</title>
        <authorList>
            <person name="Jolma A."/>
            <person name="Yin Y."/>
            <person name="Nitta K.R."/>
            <person name="Dave K."/>
            <person name="Popov A."/>
            <person name="Taipale M."/>
            <person name="Enge M."/>
            <person name="Kivioja T."/>
            <person name="Morgunova E."/>
            <person name="Taipale J."/>
        </authorList>
    </citation>
    <scope>X-RAY CRYSTALLOGRAPHY (3.50 ANGSTROMS) OF 279-336 IN COMPLEX WITH DLX3 AND DNA</scope>
    <scope>SUBUNIT</scope>
    <scope>DNA-BINDING</scope>
</reference>
<reference evidence="16" key="10">
    <citation type="journal article" date="2017" name="Science">
        <title>Impact of cytosine methylation on DNA binding specificities of human transcription factors.</title>
        <authorList>
            <person name="Yin Y."/>
            <person name="Morgunova E."/>
            <person name="Jolma A."/>
            <person name="Kaasinen E."/>
            <person name="Sahu B."/>
            <person name="Khund-Sayeed S."/>
            <person name="Das P.K."/>
            <person name="Kivioja T."/>
            <person name="Dave K."/>
            <person name="Zhong F."/>
            <person name="Nitta K.R."/>
            <person name="Taipale M."/>
            <person name="Popov A."/>
            <person name="Ginno P.A."/>
            <person name="Domcke S."/>
            <person name="Yan J."/>
            <person name="Schubeler D."/>
            <person name="Vinson C."/>
            <person name="Taipale J."/>
        </authorList>
    </citation>
    <scope>X-RAY CRYSTALLOGRAPHY (2.54 ANGSTROMS) OF 279-333 IN COMPLEX WITH HOXB13 AND METHYLATED DNA</scope>
    <scope>SUBUNIT</scope>
    <scope>DNA-BINDING</scope>
</reference>
<reference key="11">
    <citation type="journal article" date="2009" name="Neurology">
        <title>MEIS1 p.R272H in familial restless legs syndrome.</title>
        <authorList>
            <person name="Vilarino-Guell C."/>
            <person name="Chai H."/>
            <person name="Keeling B.H."/>
            <person name="Young J.E."/>
            <person name="Rajput A."/>
            <person name="Lynch T."/>
            <person name="Aasly J.O."/>
            <person name="Uitti R.J."/>
            <person name="Wszolek Z.K."/>
            <person name="Farrer M.J."/>
            <person name="Lin S.-C."/>
        </authorList>
    </citation>
    <scope>VARIANT HIS-272</scope>
    <scope>POSSIBLE INVOLVEMENT IN SUSCEPTIBILITY TO RESTLESS LEGS SYNDROME TYPE 7</scope>
</reference>
<proteinExistence type="evidence at protein level"/>
<protein>
    <recommendedName>
        <fullName>Homeobox protein Meis1</fullName>
    </recommendedName>
</protein>
<keyword id="KW-0002">3D-structure</keyword>
<keyword id="KW-0010">Activator</keyword>
<keyword id="KW-0025">Alternative splicing</keyword>
<keyword id="KW-0217">Developmental protein</keyword>
<keyword id="KW-0238">DNA-binding</keyword>
<keyword id="KW-0371">Homeobox</keyword>
<keyword id="KW-0539">Nucleus</keyword>
<keyword id="KW-1267">Proteomics identification</keyword>
<keyword id="KW-1185">Reference proteome</keyword>
<keyword id="KW-0804">Transcription</keyword>
<comment type="function">
    <text evidence="5">Acts as a transcriptional regulator of PAX6. Acts as a transcriptional activator of PF4 in complex with PBX1 or PBX2. Required for hematopoiesis, megakaryocyte lineage development and vascular patterning. May function as a cofactor for HOXA7 and HOXA9 in the induction of myeloid leukemias.</text>
</comment>
<comment type="subunit">
    <text evidence="5 7 8 9">Interacts with the N-terminal region of PBX1 to form a heterodimer which binds DNA including a cAMP-responsive sequence in CYP17. Also forms heterodimers with PBX2. Forms heterotrimers with PBX1 or PBX2 and a number of HOX proteins including HOXA9, HOXD4 and HOXD9 where it acts as a non-DNA-binding partner. Also forms heterotrimers with PBX1 and HOX proteins including HOXD9 and HOXD10 where PBX1 is the non-DNA-binding partner. Heterodimer with DLX3 (PubMed:26550823). Heterodimer with HOXB13 (PubMed:28473536).</text>
</comment>
<comment type="interaction">
    <interactant intactId="EBI-1210694">
        <id>O00470</id>
    </interactant>
    <interactant intactId="EBI-711855">
        <id>P16220</id>
        <label>CREB1</label>
    </interactant>
    <organismsDiffer>false</organismsDiffer>
    <experiments>9</experiments>
</comment>
<comment type="interaction">
    <interactant intactId="EBI-1210694">
        <id>O00470</id>
    </interactant>
    <interactant intactId="EBI-913209">
        <id>P14921</id>
        <label>ETS1</label>
    </interactant>
    <organismsDiffer>false</organismsDiffer>
    <experiments>2</experiments>
</comment>
<comment type="interaction">
    <interactant intactId="EBI-1210694">
        <id>O00470</id>
    </interactant>
    <interactant intactId="EBI-301611">
        <id>P40424</id>
        <label>PBX1</label>
    </interactant>
    <organismsDiffer>false</organismsDiffer>
    <experiments>3</experiments>
</comment>
<comment type="interaction">
    <interactant intactId="EBI-1210694">
        <id>O00470</id>
    </interactant>
    <interactant intactId="EBI-2820655">
        <id>P31314</id>
        <label>TLX1</label>
    </interactant>
    <organismsDiffer>false</organismsDiffer>
    <experiments>4</experiments>
</comment>
<comment type="subcellular location">
    <subcellularLocation>
        <location evidence="3">Nucleus</location>
    </subcellularLocation>
</comment>
<comment type="alternative products">
    <event type="alternative splicing"/>
    <isoform>
        <id>O00470-1</id>
        <name>1</name>
        <sequence type="displayed"/>
    </isoform>
    <isoform>
        <id>O00470-2</id>
        <name>2</name>
        <sequence type="described" ref="VSP_034957 VSP_034958"/>
    </isoform>
</comment>
<comment type="tissue specificity">
    <text>Expressed at low level in normal immunohepatopoietic tissues, including the fetal liver. Expressed in a subset of myeloid leukemia cell lines, with the highest expression seen in those with a megakaryocytic-erythroid phenotype. Also expressed at high levels in the cerebellum.</text>
</comment>
<comment type="disease" evidence="12">
    <disease id="DI-02589">
        <name>Restless legs syndrome 7</name>
        <acronym>RLS7</acronym>
        <description>A neurologic sleep/wake disorder characterized by uncomfortable and unpleasant sensations in the legs that appear at rest, usually at night, inducing an irresistible desire to move the legs. The disorder results in nocturnal insomnia and chronic sleep deprivation. The majority of patients also have periodic limb movements in sleep, which are characterized by involuntary, highly stereotypical, regularly occurring limb movements that occur during sleep.</description>
        <dbReference type="MIM" id="612853"/>
    </disease>
    <text>Disease susceptibility may be associated with variants affecting the gene represented in this entry.</text>
</comment>
<comment type="similarity">
    <text evidence="11">Belongs to the TALE/MEIS homeobox family.</text>
</comment>
<comment type="online information" name="Atlas of Genetics and Cytogenetics in Oncology and Haematology">
    <link uri="https://atlasgeneticsoncology.org/gene/41331/MEIS1"/>
</comment>